<protein>
    <recommendedName>
        <fullName evidence="1">Acyl carrier protein</fullName>
        <shortName evidence="1">ACP</shortName>
    </recommendedName>
</protein>
<organism>
    <name type="scientific">Methylobacillus flagellatus (strain ATCC 51484 / DSM 6875 / VKM B-1610 / KT)</name>
    <dbReference type="NCBI Taxonomy" id="265072"/>
    <lineage>
        <taxon>Bacteria</taxon>
        <taxon>Pseudomonadati</taxon>
        <taxon>Pseudomonadota</taxon>
        <taxon>Betaproteobacteria</taxon>
        <taxon>Nitrosomonadales</taxon>
        <taxon>Methylophilaceae</taxon>
        <taxon>Methylobacillus</taxon>
    </lineage>
</organism>
<sequence length="78" mass="8678">MSDIEQRVKKIVSEQLGANEADVKNESSFVDDLGADSLDTVELVMALEEEFDCEIPDEEAEKITTVQQAIDYVNANLK</sequence>
<gene>
    <name evidence="1" type="primary">acpP</name>
    <name type="ordered locus">Mfla_1504</name>
</gene>
<feature type="chain" id="PRO_1000066639" description="Acyl carrier protein">
    <location>
        <begin position="1"/>
        <end position="78"/>
    </location>
</feature>
<feature type="domain" description="Carrier" evidence="2">
    <location>
        <begin position="2"/>
        <end position="77"/>
    </location>
</feature>
<feature type="modified residue" description="O-(pantetheine 4'-phosphoryl)serine" evidence="2">
    <location>
        <position position="37"/>
    </location>
</feature>
<evidence type="ECO:0000255" key="1">
    <source>
        <dbReference type="HAMAP-Rule" id="MF_01217"/>
    </source>
</evidence>
<evidence type="ECO:0000255" key="2">
    <source>
        <dbReference type="PROSITE-ProRule" id="PRU00258"/>
    </source>
</evidence>
<reference key="1">
    <citation type="submission" date="2006-03" db="EMBL/GenBank/DDBJ databases">
        <title>Complete sequence of Methylobacillus flagellatus KT.</title>
        <authorList>
            <consortium name="US DOE Joint Genome Institute"/>
            <person name="Copeland A."/>
            <person name="Lucas S."/>
            <person name="Lapidus A."/>
            <person name="Barry K."/>
            <person name="Detter J.C."/>
            <person name="Glavina del Rio T."/>
            <person name="Hammon N."/>
            <person name="Israni S."/>
            <person name="Dalin E."/>
            <person name="Tice H."/>
            <person name="Pitluck S."/>
            <person name="Brettin T."/>
            <person name="Bruce D."/>
            <person name="Han C."/>
            <person name="Tapia R."/>
            <person name="Saunders E."/>
            <person name="Gilna P."/>
            <person name="Schmutz J."/>
            <person name="Larimer F."/>
            <person name="Land M."/>
            <person name="Kyrpides N."/>
            <person name="Anderson I."/>
            <person name="Richardson P."/>
        </authorList>
    </citation>
    <scope>NUCLEOTIDE SEQUENCE [LARGE SCALE GENOMIC DNA]</scope>
    <source>
        <strain>ATCC 51484 / DSM 6875 / VKM B-1610 / KT</strain>
    </source>
</reference>
<keyword id="KW-0963">Cytoplasm</keyword>
<keyword id="KW-0275">Fatty acid biosynthesis</keyword>
<keyword id="KW-0276">Fatty acid metabolism</keyword>
<keyword id="KW-0444">Lipid biosynthesis</keyword>
<keyword id="KW-0443">Lipid metabolism</keyword>
<keyword id="KW-0596">Phosphopantetheine</keyword>
<keyword id="KW-0597">Phosphoprotein</keyword>
<keyword id="KW-1185">Reference proteome</keyword>
<proteinExistence type="inferred from homology"/>
<dbReference type="EMBL" id="CP000284">
    <property type="protein sequence ID" value="ABE49772.1"/>
    <property type="molecule type" value="Genomic_DNA"/>
</dbReference>
<dbReference type="RefSeq" id="WP_011479726.1">
    <property type="nucleotide sequence ID" value="NC_007947.1"/>
</dbReference>
<dbReference type="SMR" id="Q1H165"/>
<dbReference type="STRING" id="265072.Mfla_1504"/>
<dbReference type="KEGG" id="mfa:Mfla_1504"/>
<dbReference type="eggNOG" id="COG0236">
    <property type="taxonomic scope" value="Bacteria"/>
</dbReference>
<dbReference type="HOGENOM" id="CLU_108696_5_1_4"/>
<dbReference type="OrthoDB" id="9804551at2"/>
<dbReference type="UniPathway" id="UPA00094"/>
<dbReference type="Proteomes" id="UP000002440">
    <property type="component" value="Chromosome"/>
</dbReference>
<dbReference type="GO" id="GO:0005829">
    <property type="term" value="C:cytosol"/>
    <property type="evidence" value="ECO:0007669"/>
    <property type="project" value="TreeGrafter"/>
</dbReference>
<dbReference type="GO" id="GO:0016020">
    <property type="term" value="C:membrane"/>
    <property type="evidence" value="ECO:0007669"/>
    <property type="project" value="GOC"/>
</dbReference>
<dbReference type="GO" id="GO:0000035">
    <property type="term" value="F:acyl binding"/>
    <property type="evidence" value="ECO:0007669"/>
    <property type="project" value="TreeGrafter"/>
</dbReference>
<dbReference type="GO" id="GO:0000036">
    <property type="term" value="F:acyl carrier activity"/>
    <property type="evidence" value="ECO:0007669"/>
    <property type="project" value="UniProtKB-UniRule"/>
</dbReference>
<dbReference type="GO" id="GO:0009245">
    <property type="term" value="P:lipid A biosynthetic process"/>
    <property type="evidence" value="ECO:0007669"/>
    <property type="project" value="TreeGrafter"/>
</dbReference>
<dbReference type="FunFam" id="1.10.1200.10:FF:000001">
    <property type="entry name" value="Acyl carrier protein"/>
    <property type="match status" value="1"/>
</dbReference>
<dbReference type="Gene3D" id="1.10.1200.10">
    <property type="entry name" value="ACP-like"/>
    <property type="match status" value="1"/>
</dbReference>
<dbReference type="HAMAP" id="MF_01217">
    <property type="entry name" value="Acyl_carrier"/>
    <property type="match status" value="1"/>
</dbReference>
<dbReference type="InterPro" id="IPR003231">
    <property type="entry name" value="ACP"/>
</dbReference>
<dbReference type="InterPro" id="IPR036736">
    <property type="entry name" value="ACP-like_sf"/>
</dbReference>
<dbReference type="InterPro" id="IPR009081">
    <property type="entry name" value="PP-bd_ACP"/>
</dbReference>
<dbReference type="InterPro" id="IPR006162">
    <property type="entry name" value="Ppantetheine_attach_site"/>
</dbReference>
<dbReference type="NCBIfam" id="TIGR00517">
    <property type="entry name" value="acyl_carrier"/>
    <property type="match status" value="1"/>
</dbReference>
<dbReference type="NCBIfam" id="NF002148">
    <property type="entry name" value="PRK00982.1-2"/>
    <property type="match status" value="1"/>
</dbReference>
<dbReference type="NCBIfam" id="NF002149">
    <property type="entry name" value="PRK00982.1-3"/>
    <property type="match status" value="1"/>
</dbReference>
<dbReference type="NCBIfam" id="NF002150">
    <property type="entry name" value="PRK00982.1-4"/>
    <property type="match status" value="1"/>
</dbReference>
<dbReference type="NCBIfam" id="NF002151">
    <property type="entry name" value="PRK00982.1-5"/>
    <property type="match status" value="1"/>
</dbReference>
<dbReference type="PANTHER" id="PTHR20863">
    <property type="entry name" value="ACYL CARRIER PROTEIN"/>
    <property type="match status" value="1"/>
</dbReference>
<dbReference type="PANTHER" id="PTHR20863:SF76">
    <property type="entry name" value="CARRIER DOMAIN-CONTAINING PROTEIN"/>
    <property type="match status" value="1"/>
</dbReference>
<dbReference type="Pfam" id="PF00550">
    <property type="entry name" value="PP-binding"/>
    <property type="match status" value="1"/>
</dbReference>
<dbReference type="SUPFAM" id="SSF47336">
    <property type="entry name" value="ACP-like"/>
    <property type="match status" value="1"/>
</dbReference>
<dbReference type="PROSITE" id="PS50075">
    <property type="entry name" value="CARRIER"/>
    <property type="match status" value="1"/>
</dbReference>
<dbReference type="PROSITE" id="PS00012">
    <property type="entry name" value="PHOSPHOPANTETHEINE"/>
    <property type="match status" value="1"/>
</dbReference>
<comment type="function">
    <text evidence="1">Carrier of the growing fatty acid chain in fatty acid biosynthesis.</text>
</comment>
<comment type="pathway">
    <text evidence="1">Lipid metabolism; fatty acid biosynthesis.</text>
</comment>
<comment type="subcellular location">
    <subcellularLocation>
        <location evidence="1">Cytoplasm</location>
    </subcellularLocation>
</comment>
<comment type="PTM">
    <text evidence="1">4'-phosphopantetheine is transferred from CoA to a specific serine of apo-ACP by AcpS. This modification is essential for activity because fatty acids are bound in thioester linkage to the sulfhydryl of the prosthetic group.</text>
</comment>
<comment type="similarity">
    <text evidence="1">Belongs to the acyl carrier protein (ACP) family.</text>
</comment>
<accession>Q1H165</accession>
<name>ACP_METFK</name>